<organism>
    <name type="scientific">Otolemur crassicaudatus</name>
    <name type="common">Brown greater galago</name>
    <name type="synonym">Galago crassicaudatus</name>
    <dbReference type="NCBI Taxonomy" id="9463"/>
    <lineage>
        <taxon>Eukaryota</taxon>
        <taxon>Metazoa</taxon>
        <taxon>Chordata</taxon>
        <taxon>Craniata</taxon>
        <taxon>Vertebrata</taxon>
        <taxon>Euteleostomi</taxon>
        <taxon>Mammalia</taxon>
        <taxon>Eutheria</taxon>
        <taxon>Euarchontoglires</taxon>
        <taxon>Primates</taxon>
        <taxon>Strepsirrhini</taxon>
        <taxon>Lorisiformes</taxon>
        <taxon>Galagidae</taxon>
        <taxon>Otolemur</taxon>
    </lineage>
</organism>
<gene>
    <name type="primary">HBAA</name>
</gene>
<name>HBA1_OTOCR</name>
<comment type="function">
    <text>Involved in oxygen transport from the lung to the various peripheral tissues.</text>
</comment>
<comment type="subunit">
    <text>Heterotetramer of two alpha chains and two beta chains.</text>
</comment>
<comment type="tissue specificity">
    <text>Red blood cells.</text>
</comment>
<comment type="similarity">
    <text evidence="1">Belongs to the globin family.</text>
</comment>
<proteinExistence type="evidence at transcript level"/>
<reference key="1">
    <citation type="journal article" date="1986" name="J. Mol. Biol.">
        <title>Primate evolution of the alpha-globin gene cluster and its Alu-like repeats.</title>
        <authorList>
            <person name="Sawada I."/>
            <person name="Schmid C.W."/>
        </authorList>
    </citation>
    <scope>NUCLEOTIDE SEQUENCE [GENOMIC DNA]</scope>
</reference>
<evidence type="ECO:0000255" key="1">
    <source>
        <dbReference type="PROSITE-ProRule" id="PRU00238"/>
    </source>
</evidence>
<sequence length="142" mass="15332">MVLSPTDKSIVKAAWEKVGAHAGDYGAEALERMFLSFPTTKTYFPQFDLSHGSAQVKGHGKKVADALTNAVLHVDDMPSALSALSDLHAHKLTVDPVNFKLLSHCLLVTLACHLPAEFTPAVHASLDKFMASVSTVLTSKYR</sequence>
<keyword id="KW-0349">Heme</keyword>
<keyword id="KW-0408">Iron</keyword>
<keyword id="KW-0479">Metal-binding</keyword>
<keyword id="KW-0561">Oxygen transport</keyword>
<keyword id="KW-0813">Transport</keyword>
<protein>
    <recommendedName>
        <fullName>Hemoglobin subunit alpha-A</fullName>
    </recommendedName>
    <alternativeName>
        <fullName>Alpha-A-globin</fullName>
        <shortName>Alpha-I</shortName>
    </alternativeName>
    <alternativeName>
        <fullName>Hemoglobin alpha-A chain</fullName>
    </alternativeName>
</protein>
<accession>P14259</accession>
<dbReference type="EMBL" id="M29742">
    <property type="protein sequence ID" value="AAA35448.1"/>
    <property type="molecule type" value="Genomic_DNA"/>
</dbReference>
<dbReference type="PIR" id="A25597">
    <property type="entry name" value="A25597"/>
</dbReference>
<dbReference type="SMR" id="P14259"/>
<dbReference type="GO" id="GO:0072562">
    <property type="term" value="C:blood microparticle"/>
    <property type="evidence" value="ECO:0007669"/>
    <property type="project" value="TreeGrafter"/>
</dbReference>
<dbReference type="GO" id="GO:0031838">
    <property type="term" value="C:haptoglobin-hemoglobin complex"/>
    <property type="evidence" value="ECO:0007669"/>
    <property type="project" value="TreeGrafter"/>
</dbReference>
<dbReference type="GO" id="GO:0005833">
    <property type="term" value="C:hemoglobin complex"/>
    <property type="evidence" value="ECO:0007669"/>
    <property type="project" value="InterPro"/>
</dbReference>
<dbReference type="GO" id="GO:0031720">
    <property type="term" value="F:haptoglobin binding"/>
    <property type="evidence" value="ECO:0007669"/>
    <property type="project" value="TreeGrafter"/>
</dbReference>
<dbReference type="GO" id="GO:0020037">
    <property type="term" value="F:heme binding"/>
    <property type="evidence" value="ECO:0007669"/>
    <property type="project" value="InterPro"/>
</dbReference>
<dbReference type="GO" id="GO:0005506">
    <property type="term" value="F:iron ion binding"/>
    <property type="evidence" value="ECO:0007669"/>
    <property type="project" value="InterPro"/>
</dbReference>
<dbReference type="GO" id="GO:0043177">
    <property type="term" value="F:organic acid binding"/>
    <property type="evidence" value="ECO:0007669"/>
    <property type="project" value="TreeGrafter"/>
</dbReference>
<dbReference type="GO" id="GO:0019825">
    <property type="term" value="F:oxygen binding"/>
    <property type="evidence" value="ECO:0007669"/>
    <property type="project" value="InterPro"/>
</dbReference>
<dbReference type="GO" id="GO:0005344">
    <property type="term" value="F:oxygen carrier activity"/>
    <property type="evidence" value="ECO:0007669"/>
    <property type="project" value="UniProtKB-KW"/>
</dbReference>
<dbReference type="GO" id="GO:0004601">
    <property type="term" value="F:peroxidase activity"/>
    <property type="evidence" value="ECO:0007669"/>
    <property type="project" value="TreeGrafter"/>
</dbReference>
<dbReference type="GO" id="GO:0042744">
    <property type="term" value="P:hydrogen peroxide catabolic process"/>
    <property type="evidence" value="ECO:0007669"/>
    <property type="project" value="TreeGrafter"/>
</dbReference>
<dbReference type="CDD" id="cd08927">
    <property type="entry name" value="Hb-alpha-like"/>
    <property type="match status" value="1"/>
</dbReference>
<dbReference type="FunFam" id="1.10.490.10:FF:000002">
    <property type="entry name" value="Hemoglobin subunit alpha"/>
    <property type="match status" value="1"/>
</dbReference>
<dbReference type="Gene3D" id="1.10.490.10">
    <property type="entry name" value="Globins"/>
    <property type="match status" value="1"/>
</dbReference>
<dbReference type="InterPro" id="IPR000971">
    <property type="entry name" value="Globin"/>
</dbReference>
<dbReference type="InterPro" id="IPR009050">
    <property type="entry name" value="Globin-like_sf"/>
</dbReference>
<dbReference type="InterPro" id="IPR012292">
    <property type="entry name" value="Globin/Proto"/>
</dbReference>
<dbReference type="InterPro" id="IPR002338">
    <property type="entry name" value="Hemoglobin_a-typ"/>
</dbReference>
<dbReference type="InterPro" id="IPR050056">
    <property type="entry name" value="Hemoglobin_oxygen_transport"/>
</dbReference>
<dbReference type="InterPro" id="IPR002339">
    <property type="entry name" value="Hemoglobin_pi"/>
</dbReference>
<dbReference type="PANTHER" id="PTHR11442">
    <property type="entry name" value="HEMOGLOBIN FAMILY MEMBER"/>
    <property type="match status" value="1"/>
</dbReference>
<dbReference type="PANTHER" id="PTHR11442:SF48">
    <property type="entry name" value="HEMOGLOBIN SUBUNIT ALPHA"/>
    <property type="match status" value="1"/>
</dbReference>
<dbReference type="Pfam" id="PF00042">
    <property type="entry name" value="Globin"/>
    <property type="match status" value="1"/>
</dbReference>
<dbReference type="PRINTS" id="PR00612">
    <property type="entry name" value="ALPHAHAEM"/>
</dbReference>
<dbReference type="PRINTS" id="PR00815">
    <property type="entry name" value="PIHAEM"/>
</dbReference>
<dbReference type="SUPFAM" id="SSF46458">
    <property type="entry name" value="Globin-like"/>
    <property type="match status" value="1"/>
</dbReference>
<dbReference type="PROSITE" id="PS01033">
    <property type="entry name" value="GLOBIN"/>
    <property type="match status" value="1"/>
</dbReference>
<feature type="chain" id="PRO_0000052638" description="Hemoglobin subunit alpha-A">
    <location>
        <begin position="1"/>
        <end position="142"/>
    </location>
</feature>
<feature type="domain" description="Globin" evidence="1">
    <location>
        <begin position="2"/>
        <end position="142"/>
    </location>
</feature>
<feature type="binding site" evidence="1">
    <location>
        <position position="59"/>
    </location>
    <ligand>
        <name>O2</name>
        <dbReference type="ChEBI" id="CHEBI:15379"/>
    </ligand>
</feature>
<feature type="binding site" description="proximal binding residue" evidence="1">
    <location>
        <position position="88"/>
    </location>
    <ligand>
        <name>heme b</name>
        <dbReference type="ChEBI" id="CHEBI:60344"/>
    </ligand>
    <ligandPart>
        <name>Fe</name>
        <dbReference type="ChEBI" id="CHEBI:18248"/>
    </ligandPart>
</feature>